<name>DGTL1_BRUC2</name>
<protein>
    <recommendedName>
        <fullName evidence="1">Deoxyguanosinetriphosphate triphosphohydrolase-like protein</fullName>
    </recommendedName>
</protein>
<dbReference type="EMBL" id="CP000872">
    <property type="protein sequence ID" value="ABX61952.1"/>
    <property type="molecule type" value="Genomic_DNA"/>
</dbReference>
<dbReference type="RefSeq" id="WP_004683694.1">
    <property type="nucleotide sequence ID" value="NC_010103.1"/>
</dbReference>
<dbReference type="SMR" id="A9MAP9"/>
<dbReference type="KEGG" id="bcs:BCAN_A0890"/>
<dbReference type="HOGENOM" id="CLU_028163_1_0_5"/>
<dbReference type="PhylomeDB" id="A9MAP9"/>
<dbReference type="Proteomes" id="UP000001385">
    <property type="component" value="Chromosome I"/>
</dbReference>
<dbReference type="GO" id="GO:0008832">
    <property type="term" value="F:dGTPase activity"/>
    <property type="evidence" value="ECO:0007669"/>
    <property type="project" value="TreeGrafter"/>
</dbReference>
<dbReference type="GO" id="GO:0006203">
    <property type="term" value="P:dGTP catabolic process"/>
    <property type="evidence" value="ECO:0007669"/>
    <property type="project" value="TreeGrafter"/>
</dbReference>
<dbReference type="CDD" id="cd00077">
    <property type="entry name" value="HDc"/>
    <property type="match status" value="1"/>
</dbReference>
<dbReference type="Gene3D" id="1.10.3210.10">
    <property type="entry name" value="Hypothetical protein af1432"/>
    <property type="match status" value="1"/>
</dbReference>
<dbReference type="HAMAP" id="MF_01212">
    <property type="entry name" value="dGTPase_type2"/>
    <property type="match status" value="1"/>
</dbReference>
<dbReference type="InterPro" id="IPR006261">
    <property type="entry name" value="dGTPase"/>
</dbReference>
<dbReference type="InterPro" id="IPR050135">
    <property type="entry name" value="dGTPase-like"/>
</dbReference>
<dbReference type="InterPro" id="IPR023023">
    <property type="entry name" value="dNTPase_2"/>
</dbReference>
<dbReference type="InterPro" id="IPR003607">
    <property type="entry name" value="HD/PDEase_dom"/>
</dbReference>
<dbReference type="InterPro" id="IPR006674">
    <property type="entry name" value="HD_domain"/>
</dbReference>
<dbReference type="InterPro" id="IPR006675">
    <property type="entry name" value="HDIG_dom"/>
</dbReference>
<dbReference type="InterPro" id="IPR026875">
    <property type="entry name" value="PHydrolase_assoc_dom"/>
</dbReference>
<dbReference type="NCBIfam" id="TIGR01353">
    <property type="entry name" value="dGTP_triPase"/>
    <property type="match status" value="1"/>
</dbReference>
<dbReference type="NCBIfam" id="TIGR00277">
    <property type="entry name" value="HDIG"/>
    <property type="match status" value="1"/>
</dbReference>
<dbReference type="NCBIfam" id="NF002326">
    <property type="entry name" value="PRK01286.1-1"/>
    <property type="match status" value="1"/>
</dbReference>
<dbReference type="NCBIfam" id="NF002328">
    <property type="entry name" value="PRK01286.1-3"/>
    <property type="match status" value="1"/>
</dbReference>
<dbReference type="PANTHER" id="PTHR11373:SF43">
    <property type="entry name" value="DEOXYGUANOSINETRIPHOSPHATE TRIPHOSPHOHYDROLASE-LIKE PROTEIN"/>
    <property type="match status" value="1"/>
</dbReference>
<dbReference type="PANTHER" id="PTHR11373">
    <property type="entry name" value="DEOXYNUCLEOSIDE TRIPHOSPHATE TRIPHOSPHOHYDROLASE"/>
    <property type="match status" value="1"/>
</dbReference>
<dbReference type="Pfam" id="PF01966">
    <property type="entry name" value="HD"/>
    <property type="match status" value="1"/>
</dbReference>
<dbReference type="Pfam" id="PF13286">
    <property type="entry name" value="HD_assoc"/>
    <property type="match status" value="1"/>
</dbReference>
<dbReference type="SMART" id="SM00471">
    <property type="entry name" value="HDc"/>
    <property type="match status" value="1"/>
</dbReference>
<dbReference type="SUPFAM" id="SSF109604">
    <property type="entry name" value="HD-domain/PDEase-like"/>
    <property type="match status" value="1"/>
</dbReference>
<dbReference type="PROSITE" id="PS51831">
    <property type="entry name" value="HD"/>
    <property type="match status" value="1"/>
</dbReference>
<comment type="similarity">
    <text evidence="1">Belongs to the dGTPase family. Type 2 subfamily.</text>
</comment>
<evidence type="ECO:0000255" key="1">
    <source>
        <dbReference type="HAMAP-Rule" id="MF_01212"/>
    </source>
</evidence>
<evidence type="ECO:0000255" key="2">
    <source>
        <dbReference type="PROSITE-ProRule" id="PRU01175"/>
    </source>
</evidence>
<evidence type="ECO:0000256" key="3">
    <source>
        <dbReference type="SAM" id="MobiDB-lite"/>
    </source>
</evidence>
<organism>
    <name type="scientific">Brucella canis (strain ATCC 23365 / NCTC 10854 / RM-666)</name>
    <dbReference type="NCBI Taxonomy" id="483179"/>
    <lineage>
        <taxon>Bacteria</taxon>
        <taxon>Pseudomonadati</taxon>
        <taxon>Pseudomonadota</taxon>
        <taxon>Alphaproteobacteria</taxon>
        <taxon>Hyphomicrobiales</taxon>
        <taxon>Brucellaceae</taxon>
        <taxon>Brucella/Ochrobactrum group</taxon>
        <taxon>Brucella</taxon>
    </lineage>
</organism>
<gene>
    <name type="ordered locus">BCAN_A0890</name>
</gene>
<sequence length="402" mass="45727">MSLEGIGFGYRERAPYASNPAFSRGRLVPEPESPTRTPFQRDRDRIIHSTAFRRLKHKTQVFIAHEGDHYRTRLTHTIEVAQIARALARALRLDEDLAEAVALVHDFGHTPFGHTGEDALNERMKNFGGFDHNAQSLRIVTKLEHRYADFDGLNLSWETLEGLVKHNGPLLGPYAAHPDIPVPQPILDFNARYDLELSRFASLEAQCAAIADDIAYNAHDIDDGLRAGLLTLESLDEVPLAKRLLDIVRTRYPNLDPVRTGHELVRRQITIMVEDVIEEAQRRLASARPGTMEDVHNQPRALVGFSDAMRAEEKVLKRFLFKNLYFHESVVVRRHAADRIVQDLFDACFTDPSLMPDEWRLGCEALDKAALARRVADYLAGMTDNYAVREHRRLFDRTPDLA</sequence>
<feature type="chain" id="PRO_1000085570" description="Deoxyguanosinetriphosphate triphosphohydrolase-like protein">
    <location>
        <begin position="1"/>
        <end position="402"/>
    </location>
</feature>
<feature type="domain" description="HD" evidence="2">
    <location>
        <begin position="73"/>
        <end position="217"/>
    </location>
</feature>
<feature type="region of interest" description="Disordered" evidence="3">
    <location>
        <begin position="20"/>
        <end position="39"/>
    </location>
</feature>
<proteinExistence type="inferred from homology"/>
<accession>A9MAP9</accession>
<keyword id="KW-0378">Hydrolase</keyword>
<keyword id="KW-1185">Reference proteome</keyword>
<reference key="1">
    <citation type="submission" date="2007-10" db="EMBL/GenBank/DDBJ databases">
        <title>Brucella canis ATCC 23365 whole genome shotgun sequencing project.</title>
        <authorList>
            <person name="Setubal J.C."/>
            <person name="Bowns C."/>
            <person name="Boyle S."/>
            <person name="Crasta O.R."/>
            <person name="Czar M.J."/>
            <person name="Dharmanolla C."/>
            <person name="Gillespie J.J."/>
            <person name="Kenyon R.W."/>
            <person name="Lu J."/>
            <person name="Mane S."/>
            <person name="Mohapatra S."/>
            <person name="Nagrani S."/>
            <person name="Purkayastha A."/>
            <person name="Rajasimha H.K."/>
            <person name="Shallom J.M."/>
            <person name="Shallom S."/>
            <person name="Shukla M."/>
            <person name="Snyder E.E."/>
            <person name="Sobral B.W."/>
            <person name="Wattam A.R."/>
            <person name="Will R."/>
            <person name="Williams K."/>
            <person name="Yoo H."/>
            <person name="Bruce D."/>
            <person name="Detter C."/>
            <person name="Munk C."/>
            <person name="Brettin T.S."/>
        </authorList>
    </citation>
    <scope>NUCLEOTIDE SEQUENCE [LARGE SCALE GENOMIC DNA]</scope>
    <source>
        <strain>ATCC 23365 / NCTC 10854 / RM-666</strain>
    </source>
</reference>